<feature type="chain" id="PRO_1000118572" description="Endonuclease MutS2">
    <location>
        <begin position="1"/>
        <end position="778"/>
    </location>
</feature>
<feature type="domain" description="Smr" evidence="1">
    <location>
        <begin position="702"/>
        <end position="777"/>
    </location>
</feature>
<feature type="binding site" evidence="1">
    <location>
        <begin position="328"/>
        <end position="335"/>
    </location>
    <ligand>
        <name>ATP</name>
        <dbReference type="ChEBI" id="CHEBI:30616"/>
    </ligand>
</feature>
<reference key="1">
    <citation type="journal article" date="2010" name="Genome Biol.">
        <title>Structure and dynamics of the pan-genome of Streptococcus pneumoniae and closely related species.</title>
        <authorList>
            <person name="Donati C."/>
            <person name="Hiller N.L."/>
            <person name="Tettelin H."/>
            <person name="Muzzi A."/>
            <person name="Croucher N.J."/>
            <person name="Angiuoli S.V."/>
            <person name="Oggioni M."/>
            <person name="Dunning Hotopp J.C."/>
            <person name="Hu F.Z."/>
            <person name="Riley D.R."/>
            <person name="Covacci A."/>
            <person name="Mitchell T.J."/>
            <person name="Bentley S.D."/>
            <person name="Kilian M."/>
            <person name="Ehrlich G.D."/>
            <person name="Rappuoli R."/>
            <person name="Moxon E.R."/>
            <person name="Masignani V."/>
        </authorList>
    </citation>
    <scope>NUCLEOTIDE SEQUENCE [LARGE SCALE GENOMIC DNA]</scope>
    <source>
        <strain>Taiwan19F-14</strain>
    </source>
</reference>
<accession>C1CPR7</accession>
<sequence length="778" mass="87626">MNKKILETLEFDKVKALFEPHLLTEQGLEQLRQLAPTAKADKIKQAFAEMKEMQALFVEQPHFTILSTKEIAGVCKRLEMGADLNIEEFLLLKRVLLASRELQSFYANLENVSLEELALWFEKLHDFPQLQGNLQAFNDAGFIENFASEELARIRRKIHDSESQVRDVLQDLLKQKAQMLTEGIVASRNGRQVLPVKNTYRNKIAGVVHDISASGNTVYIEPREVVKLSEEIASLRADERYEMLRILQEISERVRPHATEIANDAWIIGHLDLIRAKVRFIQERQAVVPQLSENQEIQLLHVCHPLVKNAVANDVHFGQDLTAIVITGPNTGGKTIMLKTLGLTQVMAQSGLPILADRGSRVGIFEEIFADIGDEQSIEQSLSTFSSHMTNIVDILGKVNQHSLLLLDELGAGTDPQEGAALAMAILEDLRLRQIKTMATTHYPELKAYGIETAFVQNASMEFDTATLRPTYRFMQGVPGRSNAFEIAKRLGLSEVIVGDASQQIDQDNDVNRIIEQLEEQTLESRKRLDNIREVEQENLKMNRALKKLYNELNREKETELNKAREQAAEIVDMALSESDQILKNLHSKSQLKPHEIIEAKAKLKKLAPEKVDLSKNKVLQKAKKKRAPKVGDDIVVLSYGQRGTLTSQLKDGRWEAQVGLIKMTLEEKEFDLVQAQQEKPVKKKQVNVVKRTSGRGPQARLDLRGKRYEEAMNELDIFIDQALLNNMAQVDIIHGIGTGVIREGVTKYLQRNKHVKSFGYAPQNAGGSGATIVTFKG</sequence>
<dbReference type="EC" id="3.1.-.-" evidence="1"/>
<dbReference type="EC" id="3.6.4.-" evidence="1"/>
<dbReference type="EMBL" id="CP000921">
    <property type="protein sequence ID" value="ACO24218.1"/>
    <property type="molecule type" value="Genomic_DNA"/>
</dbReference>
<dbReference type="RefSeq" id="WP_001035020.1">
    <property type="nucleotide sequence ID" value="NC_012469.1"/>
</dbReference>
<dbReference type="SMR" id="C1CPR7"/>
<dbReference type="KEGG" id="snt:SPT_0444"/>
<dbReference type="HOGENOM" id="CLU_011252_2_1_9"/>
<dbReference type="GO" id="GO:0005524">
    <property type="term" value="F:ATP binding"/>
    <property type="evidence" value="ECO:0007669"/>
    <property type="project" value="UniProtKB-UniRule"/>
</dbReference>
<dbReference type="GO" id="GO:0016887">
    <property type="term" value="F:ATP hydrolysis activity"/>
    <property type="evidence" value="ECO:0007669"/>
    <property type="project" value="InterPro"/>
</dbReference>
<dbReference type="GO" id="GO:0140664">
    <property type="term" value="F:ATP-dependent DNA damage sensor activity"/>
    <property type="evidence" value="ECO:0007669"/>
    <property type="project" value="InterPro"/>
</dbReference>
<dbReference type="GO" id="GO:0004519">
    <property type="term" value="F:endonuclease activity"/>
    <property type="evidence" value="ECO:0007669"/>
    <property type="project" value="UniProtKB-UniRule"/>
</dbReference>
<dbReference type="GO" id="GO:0030983">
    <property type="term" value="F:mismatched DNA binding"/>
    <property type="evidence" value="ECO:0007669"/>
    <property type="project" value="InterPro"/>
</dbReference>
<dbReference type="GO" id="GO:0043023">
    <property type="term" value="F:ribosomal large subunit binding"/>
    <property type="evidence" value="ECO:0007669"/>
    <property type="project" value="UniProtKB-UniRule"/>
</dbReference>
<dbReference type="GO" id="GO:0019843">
    <property type="term" value="F:rRNA binding"/>
    <property type="evidence" value="ECO:0007669"/>
    <property type="project" value="UniProtKB-UniRule"/>
</dbReference>
<dbReference type="GO" id="GO:0006298">
    <property type="term" value="P:mismatch repair"/>
    <property type="evidence" value="ECO:0007669"/>
    <property type="project" value="InterPro"/>
</dbReference>
<dbReference type="GO" id="GO:0045910">
    <property type="term" value="P:negative regulation of DNA recombination"/>
    <property type="evidence" value="ECO:0007669"/>
    <property type="project" value="InterPro"/>
</dbReference>
<dbReference type="GO" id="GO:0072344">
    <property type="term" value="P:rescue of stalled ribosome"/>
    <property type="evidence" value="ECO:0007669"/>
    <property type="project" value="UniProtKB-UniRule"/>
</dbReference>
<dbReference type="FunFam" id="3.30.1370.110:FF:000005">
    <property type="entry name" value="Endonuclease MutS2"/>
    <property type="match status" value="1"/>
</dbReference>
<dbReference type="FunFam" id="3.40.50.300:FF:000830">
    <property type="entry name" value="Endonuclease MutS2"/>
    <property type="match status" value="1"/>
</dbReference>
<dbReference type="Gene3D" id="3.30.1370.110">
    <property type="match status" value="1"/>
</dbReference>
<dbReference type="Gene3D" id="3.40.50.300">
    <property type="entry name" value="P-loop containing nucleotide triphosphate hydrolases"/>
    <property type="match status" value="1"/>
</dbReference>
<dbReference type="HAMAP" id="MF_00092">
    <property type="entry name" value="MutS2"/>
    <property type="match status" value="1"/>
</dbReference>
<dbReference type="InterPro" id="IPR000432">
    <property type="entry name" value="DNA_mismatch_repair_MutS_C"/>
</dbReference>
<dbReference type="InterPro" id="IPR007696">
    <property type="entry name" value="DNA_mismatch_repair_MutS_core"/>
</dbReference>
<dbReference type="InterPro" id="IPR036187">
    <property type="entry name" value="DNA_mismatch_repair_MutS_sf"/>
</dbReference>
<dbReference type="InterPro" id="IPR046893">
    <property type="entry name" value="MSSS"/>
</dbReference>
<dbReference type="InterPro" id="IPR045076">
    <property type="entry name" value="MutS"/>
</dbReference>
<dbReference type="InterPro" id="IPR005747">
    <property type="entry name" value="MutS2"/>
</dbReference>
<dbReference type="InterPro" id="IPR027417">
    <property type="entry name" value="P-loop_NTPase"/>
</dbReference>
<dbReference type="InterPro" id="IPR002625">
    <property type="entry name" value="Smr_dom"/>
</dbReference>
<dbReference type="InterPro" id="IPR036063">
    <property type="entry name" value="Smr_dom_sf"/>
</dbReference>
<dbReference type="NCBIfam" id="TIGR01069">
    <property type="entry name" value="mutS2"/>
    <property type="match status" value="1"/>
</dbReference>
<dbReference type="PANTHER" id="PTHR48466">
    <property type="entry name" value="OS10G0509000 PROTEIN-RELATED"/>
    <property type="match status" value="1"/>
</dbReference>
<dbReference type="PANTHER" id="PTHR48466:SF1">
    <property type="entry name" value="SMR DOMAIN-CONTAINING PROTEIN"/>
    <property type="match status" value="1"/>
</dbReference>
<dbReference type="Pfam" id="PF20297">
    <property type="entry name" value="MSSS"/>
    <property type="match status" value="1"/>
</dbReference>
<dbReference type="Pfam" id="PF00488">
    <property type="entry name" value="MutS_V"/>
    <property type="match status" value="1"/>
</dbReference>
<dbReference type="Pfam" id="PF01713">
    <property type="entry name" value="Smr"/>
    <property type="match status" value="1"/>
</dbReference>
<dbReference type="PIRSF" id="PIRSF005814">
    <property type="entry name" value="MutS_YshD"/>
    <property type="match status" value="1"/>
</dbReference>
<dbReference type="SMART" id="SM00534">
    <property type="entry name" value="MUTSac"/>
    <property type="match status" value="1"/>
</dbReference>
<dbReference type="SMART" id="SM00533">
    <property type="entry name" value="MUTSd"/>
    <property type="match status" value="1"/>
</dbReference>
<dbReference type="SMART" id="SM00463">
    <property type="entry name" value="SMR"/>
    <property type="match status" value="1"/>
</dbReference>
<dbReference type="SUPFAM" id="SSF48334">
    <property type="entry name" value="DNA repair protein MutS, domain III"/>
    <property type="match status" value="1"/>
</dbReference>
<dbReference type="SUPFAM" id="SSF52540">
    <property type="entry name" value="P-loop containing nucleoside triphosphate hydrolases"/>
    <property type="match status" value="1"/>
</dbReference>
<dbReference type="SUPFAM" id="SSF160443">
    <property type="entry name" value="SMR domain-like"/>
    <property type="match status" value="1"/>
</dbReference>
<dbReference type="PROSITE" id="PS00486">
    <property type="entry name" value="DNA_MISMATCH_REPAIR_2"/>
    <property type="match status" value="1"/>
</dbReference>
<dbReference type="PROSITE" id="PS50828">
    <property type="entry name" value="SMR"/>
    <property type="match status" value="1"/>
</dbReference>
<organism>
    <name type="scientific">Streptococcus pneumoniae (strain Taiwan19F-14)</name>
    <dbReference type="NCBI Taxonomy" id="487213"/>
    <lineage>
        <taxon>Bacteria</taxon>
        <taxon>Bacillati</taxon>
        <taxon>Bacillota</taxon>
        <taxon>Bacilli</taxon>
        <taxon>Lactobacillales</taxon>
        <taxon>Streptococcaceae</taxon>
        <taxon>Streptococcus</taxon>
    </lineage>
</organism>
<evidence type="ECO:0000255" key="1">
    <source>
        <dbReference type="HAMAP-Rule" id="MF_00092"/>
    </source>
</evidence>
<name>MUTS2_STRZT</name>
<protein>
    <recommendedName>
        <fullName evidence="1">Endonuclease MutS2</fullName>
        <ecNumber evidence="1">3.1.-.-</ecNumber>
    </recommendedName>
    <alternativeName>
        <fullName evidence="1">Ribosome-associated protein quality control-upstream factor</fullName>
        <shortName evidence="1">RQC-upstream factor</shortName>
        <shortName evidence="1">RqcU</shortName>
        <ecNumber evidence="1">3.6.4.-</ecNumber>
    </alternativeName>
</protein>
<keyword id="KW-0067">ATP-binding</keyword>
<keyword id="KW-0238">DNA-binding</keyword>
<keyword id="KW-0255">Endonuclease</keyword>
<keyword id="KW-0378">Hydrolase</keyword>
<keyword id="KW-0540">Nuclease</keyword>
<keyword id="KW-0547">Nucleotide-binding</keyword>
<keyword id="KW-0694">RNA-binding</keyword>
<keyword id="KW-0699">rRNA-binding</keyword>
<comment type="function">
    <text evidence="1">Endonuclease that is involved in the suppression of homologous recombination and thus may have a key role in the control of bacterial genetic diversity.</text>
</comment>
<comment type="function">
    <text evidence="1">Acts as a ribosome collision sensor, splitting the ribosome into its 2 subunits. Detects stalled/collided 70S ribosomes which it binds and splits by an ATP-hydrolysis driven conformational change. Acts upstream of the ribosome quality control system (RQC), a ribosome-associated complex that mediates the extraction of incompletely synthesized nascent chains from stalled ribosomes and their subsequent degradation. Probably generates substrates for RQC.</text>
</comment>
<comment type="subunit">
    <text evidence="1">Homodimer. Binds to stalled ribosomes, contacting rRNA.</text>
</comment>
<comment type="similarity">
    <text evidence="1">Belongs to the DNA mismatch repair MutS family. MutS2 subfamily.</text>
</comment>
<proteinExistence type="inferred from homology"/>
<gene>
    <name evidence="1" type="primary">mutS2</name>
    <name evidence="1" type="synonym">rqcU</name>
    <name type="ordered locus">SPT_0444</name>
</gene>